<feature type="chain" id="PRO_1000165776" description="Large ribosomal subunit protein uL2">
    <location>
        <begin position="1"/>
        <end position="276"/>
    </location>
</feature>
<feature type="region of interest" description="Disordered" evidence="2">
    <location>
        <begin position="223"/>
        <end position="276"/>
    </location>
</feature>
<feature type="compositionally biased region" description="Basic and acidic residues" evidence="2">
    <location>
        <begin position="230"/>
        <end position="240"/>
    </location>
</feature>
<feature type="compositionally biased region" description="Basic and acidic residues" evidence="2">
    <location>
        <begin position="263"/>
        <end position="276"/>
    </location>
</feature>
<reference key="1">
    <citation type="submission" date="2007-11" db="EMBL/GenBank/DDBJ databases">
        <title>The genome sequence of the hyperthermophilic bacterium Thermotoga neapolitana.</title>
        <authorList>
            <person name="Lim S.K."/>
            <person name="Kim J.S."/>
            <person name="Cha S.H."/>
            <person name="Park B.C."/>
            <person name="Lee D.S."/>
            <person name="Tae H.S."/>
            <person name="Kim S.-J."/>
            <person name="Kim J.J."/>
            <person name="Park K.J."/>
            <person name="Lee S.Y."/>
        </authorList>
    </citation>
    <scope>NUCLEOTIDE SEQUENCE [LARGE SCALE GENOMIC DNA]</scope>
    <source>
        <strain>ATCC 49049 / DSM 4359 / NBRC 107923 / NS-E</strain>
    </source>
</reference>
<keyword id="KW-0687">Ribonucleoprotein</keyword>
<keyword id="KW-0689">Ribosomal protein</keyword>
<keyword id="KW-0694">RNA-binding</keyword>
<keyword id="KW-0699">rRNA-binding</keyword>
<accession>B9K889</accession>
<protein>
    <recommendedName>
        <fullName evidence="1">Large ribosomal subunit protein uL2</fullName>
    </recommendedName>
    <alternativeName>
        <fullName evidence="3">50S ribosomal protein L2</fullName>
    </alternativeName>
</protein>
<organism>
    <name type="scientific">Thermotoga neapolitana (strain ATCC 49049 / DSM 4359 / NBRC 107923 / NS-E)</name>
    <dbReference type="NCBI Taxonomy" id="309803"/>
    <lineage>
        <taxon>Bacteria</taxon>
        <taxon>Thermotogati</taxon>
        <taxon>Thermotogota</taxon>
        <taxon>Thermotogae</taxon>
        <taxon>Thermotogales</taxon>
        <taxon>Thermotogaceae</taxon>
        <taxon>Thermotoga</taxon>
    </lineage>
</organism>
<dbReference type="EMBL" id="CP000916">
    <property type="protein sequence ID" value="ACM23172.1"/>
    <property type="molecule type" value="Genomic_DNA"/>
</dbReference>
<dbReference type="RefSeq" id="WP_015919489.1">
    <property type="nucleotide sequence ID" value="NC_011978.1"/>
</dbReference>
<dbReference type="SMR" id="B9K889"/>
<dbReference type="STRING" id="309803.CTN_0996"/>
<dbReference type="KEGG" id="tna:CTN_0996"/>
<dbReference type="eggNOG" id="COG0090">
    <property type="taxonomic scope" value="Bacteria"/>
</dbReference>
<dbReference type="HOGENOM" id="CLU_036235_2_1_0"/>
<dbReference type="Proteomes" id="UP000000445">
    <property type="component" value="Chromosome"/>
</dbReference>
<dbReference type="GO" id="GO:0015934">
    <property type="term" value="C:large ribosomal subunit"/>
    <property type="evidence" value="ECO:0007669"/>
    <property type="project" value="InterPro"/>
</dbReference>
<dbReference type="GO" id="GO:0019843">
    <property type="term" value="F:rRNA binding"/>
    <property type="evidence" value="ECO:0007669"/>
    <property type="project" value="UniProtKB-UniRule"/>
</dbReference>
<dbReference type="GO" id="GO:0003735">
    <property type="term" value="F:structural constituent of ribosome"/>
    <property type="evidence" value="ECO:0007669"/>
    <property type="project" value="InterPro"/>
</dbReference>
<dbReference type="GO" id="GO:0016740">
    <property type="term" value="F:transferase activity"/>
    <property type="evidence" value="ECO:0007669"/>
    <property type="project" value="InterPro"/>
</dbReference>
<dbReference type="GO" id="GO:0002181">
    <property type="term" value="P:cytoplasmic translation"/>
    <property type="evidence" value="ECO:0007669"/>
    <property type="project" value="TreeGrafter"/>
</dbReference>
<dbReference type="FunFam" id="2.30.30.30:FF:000001">
    <property type="entry name" value="50S ribosomal protein L2"/>
    <property type="match status" value="1"/>
</dbReference>
<dbReference type="FunFam" id="2.40.50.140:FF:000003">
    <property type="entry name" value="50S ribosomal protein L2"/>
    <property type="match status" value="1"/>
</dbReference>
<dbReference type="FunFam" id="4.10.950.10:FF:000001">
    <property type="entry name" value="50S ribosomal protein L2"/>
    <property type="match status" value="1"/>
</dbReference>
<dbReference type="Gene3D" id="2.30.30.30">
    <property type="match status" value="1"/>
</dbReference>
<dbReference type="Gene3D" id="2.40.50.140">
    <property type="entry name" value="Nucleic acid-binding proteins"/>
    <property type="match status" value="1"/>
</dbReference>
<dbReference type="Gene3D" id="4.10.950.10">
    <property type="entry name" value="Ribosomal protein L2, domain 3"/>
    <property type="match status" value="1"/>
</dbReference>
<dbReference type="HAMAP" id="MF_01320_B">
    <property type="entry name" value="Ribosomal_uL2_B"/>
    <property type="match status" value="1"/>
</dbReference>
<dbReference type="InterPro" id="IPR012340">
    <property type="entry name" value="NA-bd_OB-fold"/>
</dbReference>
<dbReference type="InterPro" id="IPR014722">
    <property type="entry name" value="Rib_uL2_dom2"/>
</dbReference>
<dbReference type="InterPro" id="IPR002171">
    <property type="entry name" value="Ribosomal_uL2"/>
</dbReference>
<dbReference type="InterPro" id="IPR005880">
    <property type="entry name" value="Ribosomal_uL2_bac/org-type"/>
</dbReference>
<dbReference type="InterPro" id="IPR022669">
    <property type="entry name" value="Ribosomal_uL2_C"/>
</dbReference>
<dbReference type="InterPro" id="IPR022671">
    <property type="entry name" value="Ribosomal_uL2_CS"/>
</dbReference>
<dbReference type="InterPro" id="IPR014726">
    <property type="entry name" value="Ribosomal_uL2_dom3"/>
</dbReference>
<dbReference type="InterPro" id="IPR022666">
    <property type="entry name" value="Ribosomal_uL2_RNA-bd_dom"/>
</dbReference>
<dbReference type="InterPro" id="IPR008991">
    <property type="entry name" value="Translation_prot_SH3-like_sf"/>
</dbReference>
<dbReference type="NCBIfam" id="TIGR01171">
    <property type="entry name" value="rplB_bact"/>
    <property type="match status" value="1"/>
</dbReference>
<dbReference type="PANTHER" id="PTHR13691:SF5">
    <property type="entry name" value="LARGE RIBOSOMAL SUBUNIT PROTEIN UL2M"/>
    <property type="match status" value="1"/>
</dbReference>
<dbReference type="PANTHER" id="PTHR13691">
    <property type="entry name" value="RIBOSOMAL PROTEIN L2"/>
    <property type="match status" value="1"/>
</dbReference>
<dbReference type="Pfam" id="PF00181">
    <property type="entry name" value="Ribosomal_L2"/>
    <property type="match status" value="1"/>
</dbReference>
<dbReference type="Pfam" id="PF03947">
    <property type="entry name" value="Ribosomal_L2_C"/>
    <property type="match status" value="1"/>
</dbReference>
<dbReference type="PIRSF" id="PIRSF002158">
    <property type="entry name" value="Ribosomal_L2"/>
    <property type="match status" value="1"/>
</dbReference>
<dbReference type="SMART" id="SM01383">
    <property type="entry name" value="Ribosomal_L2"/>
    <property type="match status" value="1"/>
</dbReference>
<dbReference type="SMART" id="SM01382">
    <property type="entry name" value="Ribosomal_L2_C"/>
    <property type="match status" value="1"/>
</dbReference>
<dbReference type="SUPFAM" id="SSF50249">
    <property type="entry name" value="Nucleic acid-binding proteins"/>
    <property type="match status" value="1"/>
</dbReference>
<dbReference type="SUPFAM" id="SSF50104">
    <property type="entry name" value="Translation proteins SH3-like domain"/>
    <property type="match status" value="1"/>
</dbReference>
<dbReference type="PROSITE" id="PS00467">
    <property type="entry name" value="RIBOSOMAL_L2"/>
    <property type="match status" value="1"/>
</dbReference>
<sequence length="276" mass="30616">MGLKRFKPVTPGRRFMVISDFSDITKTEPEKSLLAPLKKTGGRNHHGRITVRHRGGGHKRRYRIIDFKRYDKAGIPAKVLAIEYDPNRSARIALLLYADGEKRYILAPKGIKVGDTLMSGSDAEIKPGNALPLEKIPVGTLVHNVEFTPGKGGQIARAAGTYCQIMAKEGDYALLRMPSGELRKVHIKCYATVGVVGNEDHKNEVHGKAGRVRWLGRRPHVRGVAMNPVDHPHGGGEGRGKGHHPTSPWGLPTKGYKTRRGKRPSDKFIVRRRNEV</sequence>
<name>RL2_THENN</name>
<comment type="function">
    <text evidence="1">One of the primary rRNA binding proteins. Required for association of the 30S and 50S subunits to form the 70S ribosome, for tRNA binding and peptide bond formation. It has been suggested to have peptidyltransferase activity; this is somewhat controversial. Makes several contacts with the 16S rRNA in the 70S ribosome.</text>
</comment>
<comment type="subunit">
    <text evidence="1">Part of the 50S ribosomal subunit. Forms a bridge to the 30S subunit in the 70S ribosome.</text>
</comment>
<comment type="similarity">
    <text evidence="1">Belongs to the universal ribosomal protein uL2 family.</text>
</comment>
<proteinExistence type="inferred from homology"/>
<gene>
    <name evidence="1" type="primary">rplB</name>
    <name type="ordered locus">CTN_0996</name>
</gene>
<evidence type="ECO:0000255" key="1">
    <source>
        <dbReference type="HAMAP-Rule" id="MF_01320"/>
    </source>
</evidence>
<evidence type="ECO:0000256" key="2">
    <source>
        <dbReference type="SAM" id="MobiDB-lite"/>
    </source>
</evidence>
<evidence type="ECO:0000305" key="3"/>